<protein>
    <recommendedName>
        <fullName evidence="11">FK506-binding protein 59</fullName>
        <ecNumber>5.2.1.8</ecNumber>
    </recommendedName>
    <alternativeName>
        <fullName>Peptidyl-prolyl cis-trans isomerase</fullName>
        <shortName>PPIase</shortName>
    </alternativeName>
    <alternativeName>
        <fullName>Rotamase</fullName>
    </alternativeName>
    <alternativeName>
        <fullName>dFKBP59</fullName>
    </alternativeName>
</protein>
<name>FKB59_DROME</name>
<evidence type="ECO:0000255" key="1"/>
<evidence type="ECO:0000255" key="2">
    <source>
        <dbReference type="PROSITE-ProRule" id="PRU00277"/>
    </source>
</evidence>
<evidence type="ECO:0000269" key="3">
    <source>
    </source>
</evidence>
<evidence type="ECO:0000269" key="4">
    <source>
    </source>
</evidence>
<evidence type="ECO:0000269" key="5">
    <source>
    </source>
</evidence>
<evidence type="ECO:0000269" key="6">
    <source>
    </source>
</evidence>
<evidence type="ECO:0000305" key="7"/>
<evidence type="ECO:0000312" key="8">
    <source>
        <dbReference type="EMBL" id="AAF18387.1"/>
    </source>
</evidence>
<evidence type="ECO:0000312" key="9">
    <source>
        <dbReference type="EMBL" id="AAF52818.1"/>
    </source>
</evidence>
<evidence type="ECO:0000312" key="10">
    <source>
        <dbReference type="EMBL" id="AAL13958.1"/>
    </source>
</evidence>
<evidence type="ECO:0000312" key="11">
    <source>
        <dbReference type="FlyBase" id="FBgn0029174"/>
    </source>
</evidence>
<organism>
    <name type="scientific">Drosophila melanogaster</name>
    <name type="common">Fruit fly</name>
    <dbReference type="NCBI Taxonomy" id="7227"/>
    <lineage>
        <taxon>Eukaryota</taxon>
        <taxon>Metazoa</taxon>
        <taxon>Ecdysozoa</taxon>
        <taxon>Arthropoda</taxon>
        <taxon>Hexapoda</taxon>
        <taxon>Insecta</taxon>
        <taxon>Pterygota</taxon>
        <taxon>Neoptera</taxon>
        <taxon>Endopterygota</taxon>
        <taxon>Diptera</taxon>
        <taxon>Brachycera</taxon>
        <taxon>Muscomorpha</taxon>
        <taxon>Ephydroidea</taxon>
        <taxon>Drosophilidae</taxon>
        <taxon>Drosophila</taxon>
        <taxon>Sophophora</taxon>
    </lineage>
</organism>
<proteinExistence type="evidence at protein level"/>
<gene>
    <name evidence="11" type="primary">Fkbp59</name>
    <name evidence="11" type="ORF">CG4535</name>
</gene>
<comment type="function">
    <text evidence="5">May have a role in phototransduction; inhibits or prevents Ca(2+) induced stimulation of the trpl ion channel.</text>
</comment>
<comment type="catalytic activity">
    <reaction evidence="1">
        <text>[protein]-peptidylproline (omega=180) = [protein]-peptidylproline (omega=0)</text>
        <dbReference type="Rhea" id="RHEA:16237"/>
        <dbReference type="Rhea" id="RHEA-COMP:10747"/>
        <dbReference type="Rhea" id="RHEA-COMP:10748"/>
        <dbReference type="ChEBI" id="CHEBI:83833"/>
        <dbReference type="ChEBI" id="CHEBI:83834"/>
        <dbReference type="EC" id="5.2.1.8"/>
    </reaction>
</comment>
<comment type="subunit">
    <text evidence="5">Interacts with inaD and trpl, and may be part of the inaD signaling complex.</text>
</comment>
<comment type="tissue specificity">
    <text evidence="4">Expression in the embryo is limited to three tissues: lymph glands, Garland cells and oenocyte cells.</text>
</comment>
<comment type="developmental stage">
    <text evidence="4">Expressed both maternally and zygotically. First expressed at a high level in 0-2 hours embryos. Expression then gradually increases through the end of embryogenesis and laval development. Detected at lower levels in third-instar larvae and pupal stages. Expressed at a high level in adult females and at a lower level in adult males.</text>
</comment>
<accession>Q9VL78</accession>
<accession>Q9U4N1</accession>
<keyword id="KW-0413">Isomerase</keyword>
<keyword id="KW-1185">Reference proteome</keyword>
<keyword id="KW-0677">Repeat</keyword>
<keyword id="KW-0697">Rotamase</keyword>
<keyword id="KW-0716">Sensory transduction</keyword>
<keyword id="KW-0802">TPR repeat</keyword>
<keyword id="KW-0844">Vision</keyword>
<reference evidence="7 8" key="1">
    <citation type="journal article" date="2000" name="Gene">
        <title>Molecular cloning and embryonic expression of dFKBP59, a novel Drosophila FK506-binding protein.</title>
        <authorList>
            <person name="Zaffran S."/>
        </authorList>
    </citation>
    <scope>NUCLEOTIDE SEQUENCE [MRNA]</scope>
    <scope>TISSUE SPECIFICITY</scope>
    <scope>DEVELOPMENTAL STAGE</scope>
    <source>
        <strain evidence="8">Canton-S</strain>
        <tissue evidence="4">Embryo</tissue>
    </source>
</reference>
<reference evidence="9" key="2">
    <citation type="journal article" date="2000" name="Science">
        <title>The genome sequence of Drosophila melanogaster.</title>
        <authorList>
            <person name="Adams M.D."/>
            <person name="Celniker S.E."/>
            <person name="Holt R.A."/>
            <person name="Evans C.A."/>
            <person name="Gocayne J.D."/>
            <person name="Amanatides P.G."/>
            <person name="Scherer S.E."/>
            <person name="Li P.W."/>
            <person name="Hoskins R.A."/>
            <person name="Galle R.F."/>
            <person name="George R.A."/>
            <person name="Lewis S.E."/>
            <person name="Richards S."/>
            <person name="Ashburner M."/>
            <person name="Henderson S.N."/>
            <person name="Sutton G.G."/>
            <person name="Wortman J.R."/>
            <person name="Yandell M.D."/>
            <person name="Zhang Q."/>
            <person name="Chen L.X."/>
            <person name="Brandon R.C."/>
            <person name="Rogers Y.-H.C."/>
            <person name="Blazej R.G."/>
            <person name="Champe M."/>
            <person name="Pfeiffer B.D."/>
            <person name="Wan K.H."/>
            <person name="Doyle C."/>
            <person name="Baxter E.G."/>
            <person name="Helt G."/>
            <person name="Nelson C.R."/>
            <person name="Miklos G.L.G."/>
            <person name="Abril J.F."/>
            <person name="Agbayani A."/>
            <person name="An H.-J."/>
            <person name="Andrews-Pfannkoch C."/>
            <person name="Baldwin D."/>
            <person name="Ballew R.M."/>
            <person name="Basu A."/>
            <person name="Baxendale J."/>
            <person name="Bayraktaroglu L."/>
            <person name="Beasley E.M."/>
            <person name="Beeson K.Y."/>
            <person name="Benos P.V."/>
            <person name="Berman B.P."/>
            <person name="Bhandari D."/>
            <person name="Bolshakov S."/>
            <person name="Borkova D."/>
            <person name="Botchan M.R."/>
            <person name="Bouck J."/>
            <person name="Brokstein P."/>
            <person name="Brottier P."/>
            <person name="Burtis K.C."/>
            <person name="Busam D.A."/>
            <person name="Butler H."/>
            <person name="Cadieu E."/>
            <person name="Center A."/>
            <person name="Chandra I."/>
            <person name="Cherry J.M."/>
            <person name="Cawley S."/>
            <person name="Dahlke C."/>
            <person name="Davenport L.B."/>
            <person name="Davies P."/>
            <person name="de Pablos B."/>
            <person name="Delcher A."/>
            <person name="Deng Z."/>
            <person name="Mays A.D."/>
            <person name="Dew I."/>
            <person name="Dietz S.M."/>
            <person name="Dodson K."/>
            <person name="Doup L.E."/>
            <person name="Downes M."/>
            <person name="Dugan-Rocha S."/>
            <person name="Dunkov B.C."/>
            <person name="Dunn P."/>
            <person name="Durbin K.J."/>
            <person name="Evangelista C.C."/>
            <person name="Ferraz C."/>
            <person name="Ferriera S."/>
            <person name="Fleischmann W."/>
            <person name="Fosler C."/>
            <person name="Gabrielian A.E."/>
            <person name="Garg N.S."/>
            <person name="Gelbart W.M."/>
            <person name="Glasser K."/>
            <person name="Glodek A."/>
            <person name="Gong F."/>
            <person name="Gorrell J.H."/>
            <person name="Gu Z."/>
            <person name="Guan P."/>
            <person name="Harris M."/>
            <person name="Harris N.L."/>
            <person name="Harvey D.A."/>
            <person name="Heiman T.J."/>
            <person name="Hernandez J.R."/>
            <person name="Houck J."/>
            <person name="Hostin D."/>
            <person name="Houston K.A."/>
            <person name="Howland T.J."/>
            <person name="Wei M.-H."/>
            <person name="Ibegwam C."/>
            <person name="Jalali M."/>
            <person name="Kalush F."/>
            <person name="Karpen G.H."/>
            <person name="Ke Z."/>
            <person name="Kennison J.A."/>
            <person name="Ketchum K.A."/>
            <person name="Kimmel B.E."/>
            <person name="Kodira C.D."/>
            <person name="Kraft C.L."/>
            <person name="Kravitz S."/>
            <person name="Kulp D."/>
            <person name="Lai Z."/>
            <person name="Lasko P."/>
            <person name="Lei Y."/>
            <person name="Levitsky A.A."/>
            <person name="Li J.H."/>
            <person name="Li Z."/>
            <person name="Liang Y."/>
            <person name="Lin X."/>
            <person name="Liu X."/>
            <person name="Mattei B."/>
            <person name="McIntosh T.C."/>
            <person name="McLeod M.P."/>
            <person name="McPherson D."/>
            <person name="Merkulov G."/>
            <person name="Milshina N.V."/>
            <person name="Mobarry C."/>
            <person name="Morris J."/>
            <person name="Moshrefi A."/>
            <person name="Mount S.M."/>
            <person name="Moy M."/>
            <person name="Murphy B."/>
            <person name="Murphy L."/>
            <person name="Muzny D.M."/>
            <person name="Nelson D.L."/>
            <person name="Nelson D.R."/>
            <person name="Nelson K.A."/>
            <person name="Nixon K."/>
            <person name="Nusskern D.R."/>
            <person name="Pacleb J.M."/>
            <person name="Palazzolo M."/>
            <person name="Pittman G.S."/>
            <person name="Pan S."/>
            <person name="Pollard J."/>
            <person name="Puri V."/>
            <person name="Reese M.G."/>
            <person name="Reinert K."/>
            <person name="Remington K."/>
            <person name="Saunders R.D.C."/>
            <person name="Scheeler F."/>
            <person name="Shen H."/>
            <person name="Shue B.C."/>
            <person name="Siden-Kiamos I."/>
            <person name="Simpson M."/>
            <person name="Skupski M.P."/>
            <person name="Smith T.J."/>
            <person name="Spier E."/>
            <person name="Spradling A.C."/>
            <person name="Stapleton M."/>
            <person name="Strong R."/>
            <person name="Sun E."/>
            <person name="Svirskas R."/>
            <person name="Tector C."/>
            <person name="Turner R."/>
            <person name="Venter E."/>
            <person name="Wang A.H."/>
            <person name="Wang X."/>
            <person name="Wang Z.-Y."/>
            <person name="Wassarman D.A."/>
            <person name="Weinstock G.M."/>
            <person name="Weissenbach J."/>
            <person name="Williams S.M."/>
            <person name="Woodage T."/>
            <person name="Worley K.C."/>
            <person name="Wu D."/>
            <person name="Yang S."/>
            <person name="Yao Q.A."/>
            <person name="Ye J."/>
            <person name="Yeh R.-F."/>
            <person name="Zaveri J.S."/>
            <person name="Zhan M."/>
            <person name="Zhang G."/>
            <person name="Zhao Q."/>
            <person name="Zheng L."/>
            <person name="Zheng X.H."/>
            <person name="Zhong F.N."/>
            <person name="Zhong W."/>
            <person name="Zhou X."/>
            <person name="Zhu S.C."/>
            <person name="Zhu X."/>
            <person name="Smith H.O."/>
            <person name="Gibbs R.A."/>
            <person name="Myers E.W."/>
            <person name="Rubin G.M."/>
            <person name="Venter J.C."/>
        </authorList>
    </citation>
    <scope>NUCLEOTIDE SEQUENCE [LARGE SCALE GENOMIC DNA]</scope>
    <source>
        <strain evidence="3">Berkeley</strain>
    </source>
</reference>
<reference evidence="7 9" key="3">
    <citation type="journal article" date="2002" name="Genome Biol.">
        <title>Annotation of the Drosophila melanogaster euchromatic genome: a systematic review.</title>
        <authorList>
            <person name="Misra S."/>
            <person name="Crosby M.A."/>
            <person name="Mungall C.J."/>
            <person name="Matthews B.B."/>
            <person name="Campbell K.S."/>
            <person name="Hradecky P."/>
            <person name="Huang Y."/>
            <person name="Kaminker J.S."/>
            <person name="Millburn G.H."/>
            <person name="Prochnik S.E."/>
            <person name="Smith C.D."/>
            <person name="Tupy J.L."/>
            <person name="Whitfield E.J."/>
            <person name="Bayraktaroglu L."/>
            <person name="Berman B.P."/>
            <person name="Bettencourt B.R."/>
            <person name="Celniker S.E."/>
            <person name="de Grey A.D.N.J."/>
            <person name="Drysdale R.A."/>
            <person name="Harris N.L."/>
            <person name="Richter J."/>
            <person name="Russo S."/>
            <person name="Schroeder A.J."/>
            <person name="Shu S.Q."/>
            <person name="Stapleton M."/>
            <person name="Yamada C."/>
            <person name="Ashburner M."/>
            <person name="Gelbart W.M."/>
            <person name="Rubin G.M."/>
            <person name="Lewis S.E."/>
        </authorList>
    </citation>
    <scope>GENOME REANNOTATION</scope>
    <source>
        <strain>Berkeley</strain>
    </source>
</reference>
<reference evidence="10" key="4">
    <citation type="journal article" date="2002" name="Genome Biol.">
        <title>A Drosophila full-length cDNA resource.</title>
        <authorList>
            <person name="Stapleton M."/>
            <person name="Carlson J.W."/>
            <person name="Brokstein P."/>
            <person name="Yu C."/>
            <person name="Champe M."/>
            <person name="George R.A."/>
            <person name="Guarin H."/>
            <person name="Kronmiller B."/>
            <person name="Pacleb J.M."/>
            <person name="Park S."/>
            <person name="Wan K.H."/>
            <person name="Rubin G.M."/>
            <person name="Celniker S.E."/>
        </authorList>
    </citation>
    <scope>NUCLEOTIDE SEQUENCE [LARGE SCALE MRNA]</scope>
    <source>
        <strain evidence="10">Berkeley</strain>
        <tissue evidence="6">Embryo</tissue>
    </source>
</reference>
<reference evidence="7" key="5">
    <citation type="journal article" date="2001" name="J. Biol. Chem.">
        <title>Regulation of Drosophila TRPL channels by immunophilin FKBP59.</title>
        <authorList>
            <person name="Goel M."/>
            <person name="Garcia R."/>
            <person name="Estacion M."/>
            <person name="Schilling W.P."/>
        </authorList>
    </citation>
    <scope>FUNCTION</scope>
    <scope>INTERACTION WITH INAD AND TRPL</scope>
</reference>
<dbReference type="EC" id="5.2.1.8"/>
<dbReference type="EMBL" id="AF163664">
    <property type="protein sequence ID" value="AAF18387.1"/>
    <property type="molecule type" value="mRNA"/>
</dbReference>
<dbReference type="EMBL" id="AE014134">
    <property type="protein sequence ID" value="AAF52818.1"/>
    <property type="molecule type" value="Genomic_DNA"/>
</dbReference>
<dbReference type="EMBL" id="AY058729">
    <property type="protein sequence ID" value="AAL13958.1"/>
    <property type="molecule type" value="mRNA"/>
</dbReference>
<dbReference type="RefSeq" id="NP_001285784.1">
    <property type="nucleotide sequence ID" value="NM_001298855.1"/>
</dbReference>
<dbReference type="RefSeq" id="NP_524895.2">
    <property type="nucleotide sequence ID" value="NM_080156.4"/>
</dbReference>
<dbReference type="SMR" id="Q9VL78"/>
<dbReference type="BioGRID" id="70920">
    <property type="interactions" value="11"/>
</dbReference>
<dbReference type="FunCoup" id="Q9VL78">
    <property type="interactions" value="790"/>
</dbReference>
<dbReference type="IntAct" id="Q9VL78">
    <property type="interactions" value="156"/>
</dbReference>
<dbReference type="STRING" id="7227.FBpp0309663"/>
<dbReference type="PaxDb" id="7227-FBpp0079468"/>
<dbReference type="DNASU" id="47762"/>
<dbReference type="EnsemblMetazoa" id="FBtr0079872">
    <property type="protein sequence ID" value="FBpp0079468"/>
    <property type="gene ID" value="FBgn0029174"/>
</dbReference>
<dbReference type="EnsemblMetazoa" id="FBtr0342837">
    <property type="protein sequence ID" value="FBpp0309663"/>
    <property type="gene ID" value="FBgn0029174"/>
</dbReference>
<dbReference type="GeneID" id="47762"/>
<dbReference type="KEGG" id="dme:Dmel_CG4535"/>
<dbReference type="AGR" id="FB:FBgn0029174"/>
<dbReference type="CTD" id="47762"/>
<dbReference type="FlyBase" id="FBgn0029174">
    <property type="gene designation" value="Fkbp59"/>
</dbReference>
<dbReference type="VEuPathDB" id="VectorBase:FBgn0029174"/>
<dbReference type="eggNOG" id="KOG0543">
    <property type="taxonomic scope" value="Eukaryota"/>
</dbReference>
<dbReference type="HOGENOM" id="CLU_013615_13_1_1"/>
<dbReference type="InParanoid" id="Q9VL78"/>
<dbReference type="OMA" id="FGAEGNE"/>
<dbReference type="OrthoDB" id="433738at2759"/>
<dbReference type="PhylomeDB" id="Q9VL78"/>
<dbReference type="Reactome" id="R-DME-3371497">
    <property type="pathway name" value="HSP90 chaperone cycle for steroid hormone receptors (SHR) in the presence of ligand"/>
</dbReference>
<dbReference type="Reactome" id="R-DME-3371568">
    <property type="pathway name" value="Attenuation phase"/>
</dbReference>
<dbReference type="Reactome" id="R-DME-8939211">
    <property type="pathway name" value="ESR-mediated signaling"/>
</dbReference>
<dbReference type="Reactome" id="R-DME-9018519">
    <property type="pathway name" value="Estrogen-dependent gene expression"/>
</dbReference>
<dbReference type="Reactome" id="R-DME-9909505">
    <property type="pathway name" value="Modulation of host responses by IFN-stimulated genes"/>
</dbReference>
<dbReference type="SignaLink" id="Q9VL78"/>
<dbReference type="BioGRID-ORCS" id="47762">
    <property type="hits" value="0 hits in 3 CRISPR screens"/>
</dbReference>
<dbReference type="GenomeRNAi" id="47762"/>
<dbReference type="PRO" id="PR:Q9VL78"/>
<dbReference type="Proteomes" id="UP000000803">
    <property type="component" value="Chromosome 2L"/>
</dbReference>
<dbReference type="Bgee" id="FBgn0029174">
    <property type="expression patterns" value="Expressed in embryonic/larval hemocyte (Drosophila) and 173 other cell types or tissues"/>
</dbReference>
<dbReference type="ExpressionAtlas" id="Q9VL78">
    <property type="expression patterns" value="baseline and differential"/>
</dbReference>
<dbReference type="GO" id="GO:0005737">
    <property type="term" value="C:cytoplasm"/>
    <property type="evidence" value="ECO:0000318"/>
    <property type="project" value="GO_Central"/>
</dbReference>
<dbReference type="GO" id="GO:0016027">
    <property type="term" value="C:inaD signaling complex"/>
    <property type="evidence" value="ECO:0000353"/>
    <property type="project" value="UniProtKB"/>
</dbReference>
<dbReference type="GO" id="GO:0005528">
    <property type="term" value="F:FK506 binding"/>
    <property type="evidence" value="ECO:0000250"/>
    <property type="project" value="FlyBase"/>
</dbReference>
<dbReference type="GO" id="GO:0003755">
    <property type="term" value="F:peptidyl-prolyl cis-trans isomerase activity"/>
    <property type="evidence" value="ECO:0000318"/>
    <property type="project" value="GO_Central"/>
</dbReference>
<dbReference type="GO" id="GO:0061077">
    <property type="term" value="P:chaperone-mediated protein folding"/>
    <property type="evidence" value="ECO:0000318"/>
    <property type="project" value="GO_Central"/>
</dbReference>
<dbReference type="GO" id="GO:0050908">
    <property type="term" value="P:detection of light stimulus involved in visual perception"/>
    <property type="evidence" value="ECO:0000353"/>
    <property type="project" value="UniProtKB"/>
</dbReference>
<dbReference type="GO" id="GO:0051924">
    <property type="term" value="P:regulation of calcium ion transport"/>
    <property type="evidence" value="ECO:0000314"/>
    <property type="project" value="FlyBase"/>
</dbReference>
<dbReference type="FunFam" id="1.25.40.10:FF:000008">
    <property type="entry name" value="Peptidylprolyl isomerase"/>
    <property type="match status" value="1"/>
</dbReference>
<dbReference type="FunFam" id="3.10.50.40:FF:000013">
    <property type="entry name" value="Peptidylprolyl isomerase"/>
    <property type="match status" value="1"/>
</dbReference>
<dbReference type="FunFam" id="3.10.50.40:FF:000044">
    <property type="entry name" value="Peptidylprolyl isomerase"/>
    <property type="match status" value="1"/>
</dbReference>
<dbReference type="Gene3D" id="3.10.50.40">
    <property type="match status" value="2"/>
</dbReference>
<dbReference type="Gene3D" id="1.25.40.10">
    <property type="entry name" value="Tetratricopeptide repeat domain"/>
    <property type="match status" value="1"/>
</dbReference>
<dbReference type="InterPro" id="IPR050754">
    <property type="entry name" value="FKBP4/5/8-like"/>
</dbReference>
<dbReference type="InterPro" id="IPR046357">
    <property type="entry name" value="PPIase_dom_sf"/>
</dbReference>
<dbReference type="InterPro" id="IPR001179">
    <property type="entry name" value="PPIase_FKBP_dom"/>
</dbReference>
<dbReference type="InterPro" id="IPR011990">
    <property type="entry name" value="TPR-like_helical_dom_sf"/>
</dbReference>
<dbReference type="InterPro" id="IPR019734">
    <property type="entry name" value="TPR_rpt"/>
</dbReference>
<dbReference type="PANTHER" id="PTHR46512">
    <property type="entry name" value="PEPTIDYLPROLYL ISOMERASE"/>
    <property type="match status" value="1"/>
</dbReference>
<dbReference type="PANTHER" id="PTHR46512:SF9">
    <property type="entry name" value="PEPTIDYLPROLYL ISOMERASE"/>
    <property type="match status" value="1"/>
</dbReference>
<dbReference type="Pfam" id="PF00254">
    <property type="entry name" value="FKBP_C"/>
    <property type="match status" value="2"/>
</dbReference>
<dbReference type="Pfam" id="PF00515">
    <property type="entry name" value="TPR_1"/>
    <property type="match status" value="1"/>
</dbReference>
<dbReference type="SMART" id="SM00028">
    <property type="entry name" value="TPR"/>
    <property type="match status" value="3"/>
</dbReference>
<dbReference type="SUPFAM" id="SSF54534">
    <property type="entry name" value="FKBP-like"/>
    <property type="match status" value="2"/>
</dbReference>
<dbReference type="SUPFAM" id="SSF48452">
    <property type="entry name" value="TPR-like"/>
    <property type="match status" value="1"/>
</dbReference>
<dbReference type="PROSITE" id="PS50059">
    <property type="entry name" value="FKBP_PPIASE"/>
    <property type="match status" value="2"/>
</dbReference>
<dbReference type="PROSITE" id="PS50005">
    <property type="entry name" value="TPR"/>
    <property type="match status" value="3"/>
</dbReference>
<dbReference type="PROSITE" id="PS50293">
    <property type="entry name" value="TPR_REGION"/>
    <property type="match status" value="1"/>
</dbReference>
<feature type="chain" id="PRO_0000075312" description="FK506-binding protein 59">
    <location>
        <begin position="1"/>
        <end position="439"/>
    </location>
</feature>
<feature type="domain" description="PPIase FKBP-type 1" evidence="2">
    <location>
        <begin position="32"/>
        <end position="120"/>
    </location>
</feature>
<feature type="domain" description="PPIase FKBP-type 2" evidence="2">
    <location>
        <begin position="149"/>
        <end position="235"/>
    </location>
</feature>
<feature type="repeat" description="TPR 1" evidence="1">
    <location>
        <begin position="252"/>
        <end position="285"/>
    </location>
</feature>
<feature type="repeat" description="TPR 2" evidence="1">
    <location>
        <begin position="297"/>
        <end position="330"/>
    </location>
</feature>
<feature type="repeat" description="TPR 3" evidence="1">
    <location>
        <begin position="331"/>
        <end position="364"/>
    </location>
</feature>
<feature type="sequence conflict" description="In Ref. 1; AAF18387." evidence="7" ref="1">
    <original>N</original>
    <variation>E</variation>
    <location>
        <position position="67"/>
    </location>
</feature>
<feature type="sequence conflict" description="In Ref. 1; AAF18387." evidence="7" ref="1">
    <original>I</original>
    <variation>V</variation>
    <location>
        <position position="182"/>
    </location>
</feature>
<feature type="sequence conflict" description="In Ref. 1; AAF18387." evidence="7" ref="1">
    <original>H</original>
    <variation>P</variation>
    <location>
        <position position="307"/>
    </location>
</feature>
<feature type="sequence conflict" description="In Ref. 1; AAF18387." evidence="7" ref="1">
    <original>L</original>
    <variation>W</variation>
    <location>
        <position position="326"/>
    </location>
</feature>
<feature type="sequence conflict" description="In Ref. 1; AAF18387." evidence="7" ref="1">
    <original>V</original>
    <variation>F</variation>
    <location>
        <position position="357"/>
    </location>
</feature>
<sequence>MPEGNKIDLSGDGGVLKEILKEGTGTETPHSGCTVSLHYTGRLVDGTEFDSSLSRNEPFEFSLGKGNVIKAFDMGVATMKLGERCFLTCAPNYAYGAAGSPPAIPPDATLIFELEMLGWKGEDLSPNQDGSIDRTILEASDKKRTPSDGAFVKAHISGSFEGRVFEDRDVEFDYGEGKAIGIIDGVEIALEKMNVGETSRIKIQAKYAFGAKGNEEFKIPPNATVEYTVKLVDCGKGLEEWKLSDEERLAEAKVYKEKGTNYFKKENWALAIKMYTKCKNILPTTVHTNEEVKKIKVATHSNIALCHQKSNDHFEAKQECNEVLALDKNNVKALYRRGQCNLTINELEDALEDFQKVIQLEPGNKAAANQVIICKQKLKESKNKEKKLYANMFTKLAANDKETEPPRETDVLSKCGEWSEEDAKREAELTLERDNIIMI</sequence>